<accession>O95677</accession>
<accession>B7Z7F7</accession>
<accession>O95464</accession>
<accession>O95679</accession>
<accession>Q8IW39</accession>
<accession>Q9NTR7</accession>
<protein>
    <recommendedName>
        <fullName evidence="14">Protein phosphatase EYA4</fullName>
        <ecNumber evidence="2">3.1.3.48</ecNumber>
    </recommendedName>
    <alternativeName>
        <fullName>Eyes absent homolog 4</fullName>
    </alternativeName>
</protein>
<feature type="chain" id="PRO_0000218651" description="Protein phosphatase EYA4">
    <location>
        <begin position="1"/>
        <end position="639"/>
    </location>
</feature>
<feature type="region of interest" description="Disordered" evidence="3">
    <location>
        <begin position="1"/>
        <end position="72"/>
    </location>
</feature>
<feature type="region of interest" description="Disordered" evidence="3">
    <location>
        <begin position="210"/>
        <end position="232"/>
    </location>
</feature>
<feature type="region of interest" description="Disordered" evidence="3">
    <location>
        <begin position="300"/>
        <end position="368"/>
    </location>
</feature>
<feature type="compositionally biased region" description="Polar residues" evidence="3">
    <location>
        <begin position="18"/>
        <end position="30"/>
    </location>
</feature>
<feature type="compositionally biased region" description="Low complexity" evidence="3">
    <location>
        <begin position="56"/>
        <end position="66"/>
    </location>
</feature>
<feature type="compositionally biased region" description="Polar residues" evidence="3">
    <location>
        <begin position="300"/>
        <end position="334"/>
    </location>
</feature>
<feature type="active site" description="Nucleophile" evidence="1">
    <location>
        <position position="375"/>
    </location>
</feature>
<feature type="active site" description="Proton donor" evidence="1">
    <location>
        <position position="377"/>
    </location>
</feature>
<feature type="binding site" evidence="1">
    <location>
        <position position="375"/>
    </location>
    <ligand>
        <name>Mg(2+)</name>
        <dbReference type="ChEBI" id="CHEBI:18420"/>
    </ligand>
</feature>
<feature type="binding site" evidence="1">
    <location>
        <position position="377"/>
    </location>
    <ligand>
        <name>Mg(2+)</name>
        <dbReference type="ChEBI" id="CHEBI:18420"/>
    </ligand>
</feature>
<feature type="binding site" evidence="1">
    <location>
        <position position="603"/>
    </location>
    <ligand>
        <name>Mg(2+)</name>
        <dbReference type="ChEBI" id="CHEBI:18420"/>
    </ligand>
</feature>
<feature type="modified residue" description="N-acetylmethionine" evidence="16">
    <location>
        <position position="1"/>
    </location>
</feature>
<feature type="modified residue" description="Phosphoserine" evidence="15 17">
    <location>
        <position position="361"/>
    </location>
</feature>
<feature type="cross-link" description="Glycyl lysine isopeptide (Lys-Gly) (interchain with G-Cter in SUMO2)" evidence="18">
    <location>
        <position position="14"/>
    </location>
</feature>
<feature type="cross-link" description="Glycyl lysine isopeptide (Lys-Gly) (interchain with G-Cter in SUMO2)" evidence="18">
    <location>
        <position position="52"/>
    </location>
</feature>
<feature type="splice variant" id="VSP_042160" description="In isoform 5." evidence="12">
    <location>
        <begin position="70"/>
        <end position="123"/>
    </location>
</feature>
<feature type="splice variant" id="VSP_001495" description="In isoform 2." evidence="13">
    <location>
        <begin position="70"/>
        <end position="92"/>
    </location>
</feature>
<feature type="splice variant" id="VSP_001496" description="In isoform 2." evidence="13">
    <original>M</original>
    <variation>V</variation>
    <location>
        <position position="93"/>
    </location>
</feature>
<feature type="splice variant" id="VSP_001497" description="In isoform 3." evidence="14">
    <original>STYSFA</original>
    <variation>RCKRRG</variation>
    <location>
        <begin position="447"/>
        <end position="452"/>
    </location>
</feature>
<feature type="splice variant" id="VSP_001498" description="In isoform 3." evidence="14">
    <location>
        <begin position="453"/>
        <end position="639"/>
    </location>
</feature>
<feature type="splice variant" id="VSP_001499" description="In isoform 4 and isoform 5." evidence="12">
    <original>MQRFGRKVVYVVIGDGVEEEQAAKK</original>
    <variation>VSRFGTNITYVVIGDGRDEEHAANQ</variation>
    <location>
        <begin position="589"/>
        <end position="613"/>
    </location>
</feature>
<feature type="sequence variant" id="VAR_036248" description="In a colorectal cancer sample; somatic mutation." evidence="6">
    <original>L</original>
    <variation>R</variation>
    <location>
        <position position="152"/>
    </location>
</feature>
<feature type="sequence variant" id="VAR_074570" description="In DFNA10; dbSNP:rs1471362858." evidence="10">
    <original>G</original>
    <variation>R</variation>
    <location>
        <position position="171"/>
    </location>
</feature>
<feature type="sequence variant" id="VAR_022932" description="In dbSNP:rs9493627." evidence="11">
    <original>G</original>
    <variation>S</variation>
    <location>
        <position position="277"/>
    </location>
</feature>
<feature type="sequence variant" id="VAR_079872" description="In DFNA10." evidence="8">
    <location>
        <begin position="288"/>
        <end position="639"/>
    </location>
</feature>
<feature type="sequence variant" id="VAR_036249" description="In a colorectal cancer sample; somatic mutation; dbSNP:rs779172192." evidence="6">
    <original>D</original>
    <variation>N</variation>
    <location>
        <position position="301"/>
    </location>
</feature>
<feature type="sequence variant" id="VAR_074571" description="In DFNA10." evidence="9">
    <original>T</original>
    <variation>R</variation>
    <location>
        <position position="548"/>
    </location>
</feature>
<feature type="sequence conflict" description="In Ref. 2; BAH13593." evidence="14" ref="2">
    <original>V</original>
    <variation>A</variation>
    <location>
        <position position="177"/>
    </location>
</feature>
<name>EYA4_HUMAN</name>
<gene>
    <name type="primary">EYA4</name>
</gene>
<sequence length="639" mass="69505">MEDSQDLNEQSVKKTCTESDVSQSQNSRSMEMQDLASPHTLVGGGDTPGSSKLEKSNLSSTSVTTNGTGGENMTVLNTADWLLSCNTPSSATMSLLAVKTEPLNSSETTATTGDGALDTFTGSVITSSGYSPRSAHQYSPQLYPSKPYPHILSTPAAQTMSAYAGQTQYSGMQQPAVYTAYSQTGQPYSLPTYDLGVMLPAIKTESGLSQTQSPLQSGCLSYSPGFSTPQPGQTPYSYQMPGSSFAPSSTIYANNSVSNSTNFSGSQQDYPSYTAFGQNQYAQYYSASTYGAYMTSNNTADGTPSSTSTYQLQESLPGLTNQPGEFDTMQSPSTPIKDLDERTCRSSGSKSRGRGRKNNPSPPPDSDLERVFVWDLDETIIVFHSLLTGSYAQKYGKDPPMAVTLGLRMEEMIFNLADTHLFFNDLEECDQVHIDDVSSDDNGQDLSTYSFATDGFHAAASSANLCLPTGVRGGVDWMRKLAFRYRRVKELYNTYKNNVGGLLGPAKRDAWLQLRAEIEGLTDSWLTNALKSLSIISTRSNCINVLVTTTQLIPALAKVLLYSLGGAFPIENIYSATKIGKESCFERIMQRFGRKVVYVVIGDGVEEEQAAKKHNMPFWRISSHSDLLALHQALELEYL</sequence>
<dbReference type="EC" id="3.1.3.48" evidence="2"/>
<dbReference type="EMBL" id="Y17114">
    <property type="protein sequence ID" value="CAA76636.1"/>
    <property type="molecule type" value="mRNA"/>
</dbReference>
<dbReference type="EMBL" id="Y17847">
    <property type="protein sequence ID" value="CAA76891.1"/>
    <property type="molecule type" value="Genomic_DNA"/>
</dbReference>
<dbReference type="EMBL" id="AJ007993">
    <property type="protein sequence ID" value="CAA07816.1"/>
    <property type="molecule type" value="mRNA"/>
</dbReference>
<dbReference type="EMBL" id="AJ007994">
    <property type="protein sequence ID" value="CAA07817.1"/>
    <property type="molecule type" value="mRNA"/>
</dbReference>
<dbReference type="EMBL" id="AK301950">
    <property type="protein sequence ID" value="BAH13593.1"/>
    <property type="molecule type" value="mRNA"/>
</dbReference>
<dbReference type="EMBL" id="AL024497">
    <property type="status" value="NOT_ANNOTATED_CDS"/>
    <property type="molecule type" value="Genomic_DNA"/>
</dbReference>
<dbReference type="EMBL" id="AL121959">
    <property type="status" value="NOT_ANNOTATED_CDS"/>
    <property type="molecule type" value="Genomic_DNA"/>
</dbReference>
<dbReference type="EMBL" id="AL450270">
    <property type="status" value="NOT_ANNOTATED_CDS"/>
    <property type="molecule type" value="Genomic_DNA"/>
</dbReference>
<dbReference type="EMBL" id="BC041063">
    <property type="protein sequence ID" value="AAH41063.1"/>
    <property type="molecule type" value="mRNA"/>
</dbReference>
<dbReference type="CCDS" id="CCDS43506.1">
    <molecule id="O95677-2"/>
</dbReference>
<dbReference type="CCDS" id="CCDS5165.1">
    <molecule id="O95677-1"/>
</dbReference>
<dbReference type="CCDS" id="CCDS75523.1">
    <molecule id="O95677-5"/>
</dbReference>
<dbReference type="RefSeq" id="NP_001287941.1">
    <molecule id="O95677-5"/>
    <property type="nucleotide sequence ID" value="NM_001301012.2"/>
</dbReference>
<dbReference type="RefSeq" id="NP_001287942.1">
    <property type="nucleotide sequence ID" value="NM_001301013.1"/>
</dbReference>
<dbReference type="RefSeq" id="NP_004091.3">
    <molecule id="O95677-1"/>
    <property type="nucleotide sequence ID" value="NM_004100.4"/>
</dbReference>
<dbReference type="RefSeq" id="NP_742101.2">
    <molecule id="O95677-2"/>
    <property type="nucleotide sequence ID" value="NM_172103.4"/>
</dbReference>
<dbReference type="RefSeq" id="NP_742103.1">
    <molecule id="O95677-4"/>
    <property type="nucleotide sequence ID" value="NM_172105.4"/>
</dbReference>
<dbReference type="RefSeq" id="XP_047274244.1">
    <molecule id="O95677-5"/>
    <property type="nucleotide sequence ID" value="XM_047418288.1"/>
</dbReference>
<dbReference type="RefSeq" id="XP_054210446.1">
    <molecule id="O95677-5"/>
    <property type="nucleotide sequence ID" value="XM_054354471.1"/>
</dbReference>
<dbReference type="SMR" id="O95677"/>
<dbReference type="BioGRID" id="108382">
    <property type="interactions" value="244"/>
</dbReference>
<dbReference type="CORUM" id="O95677"/>
<dbReference type="FunCoup" id="O95677">
    <property type="interactions" value="1584"/>
</dbReference>
<dbReference type="IntAct" id="O95677">
    <property type="interactions" value="19"/>
</dbReference>
<dbReference type="MINT" id="O95677"/>
<dbReference type="STRING" id="9606.ENSP00000432770"/>
<dbReference type="DEPOD" id="EYA4"/>
<dbReference type="GlyGen" id="O95677">
    <property type="glycosylation" value="9 sites, 1 O-linked glycan (7 sites)"/>
</dbReference>
<dbReference type="iPTMnet" id="O95677"/>
<dbReference type="PhosphoSitePlus" id="O95677"/>
<dbReference type="BioMuta" id="EYA4"/>
<dbReference type="jPOST" id="O95677"/>
<dbReference type="MassIVE" id="O95677"/>
<dbReference type="PaxDb" id="9606-ENSP00000432770"/>
<dbReference type="PeptideAtlas" id="O95677"/>
<dbReference type="ProteomicsDB" id="50990">
    <molecule id="O95677-1"/>
</dbReference>
<dbReference type="ProteomicsDB" id="50991">
    <molecule id="O95677-2"/>
</dbReference>
<dbReference type="ProteomicsDB" id="50992">
    <molecule id="O95677-3"/>
</dbReference>
<dbReference type="ProteomicsDB" id="50993">
    <molecule id="O95677-4"/>
</dbReference>
<dbReference type="ProteomicsDB" id="50994">
    <molecule id="O95677-5"/>
</dbReference>
<dbReference type="Pumba" id="O95677"/>
<dbReference type="Antibodypedia" id="32953">
    <property type="antibodies" value="223 antibodies from 30 providers"/>
</dbReference>
<dbReference type="DNASU" id="2070"/>
<dbReference type="Ensembl" id="ENST00000355286.12">
    <molecule id="O95677-1"/>
    <property type="protein sequence ID" value="ENSP00000347434.7"/>
    <property type="gene ID" value="ENSG00000112319.21"/>
</dbReference>
<dbReference type="Ensembl" id="ENST00000431403.3">
    <molecule id="O95677-2"/>
    <property type="protein sequence ID" value="ENSP00000404558.3"/>
    <property type="gene ID" value="ENSG00000112319.21"/>
</dbReference>
<dbReference type="Ensembl" id="ENST00000452339.6">
    <molecule id="O95677-5"/>
    <property type="protein sequence ID" value="ENSP00000395916.2"/>
    <property type="gene ID" value="ENSG00000112319.21"/>
</dbReference>
<dbReference type="Ensembl" id="ENST00000706301.1">
    <molecule id="O95677-5"/>
    <property type="protein sequence ID" value="ENSP00000516341.1"/>
    <property type="gene ID" value="ENSG00000112319.21"/>
</dbReference>
<dbReference type="GeneID" id="2070"/>
<dbReference type="KEGG" id="hsa:2070"/>
<dbReference type="MANE-Select" id="ENST00000355286.12">
    <property type="protein sequence ID" value="ENSP00000347434.7"/>
    <property type="RefSeq nucleotide sequence ID" value="NM_004100.5"/>
    <property type="RefSeq protein sequence ID" value="NP_004091.3"/>
</dbReference>
<dbReference type="UCSC" id="uc003qec.5">
    <molecule id="O95677-1"/>
    <property type="organism name" value="human"/>
</dbReference>
<dbReference type="AGR" id="HGNC:3522"/>
<dbReference type="CTD" id="2070"/>
<dbReference type="DisGeNET" id="2070"/>
<dbReference type="GeneCards" id="EYA4"/>
<dbReference type="GeneReviews" id="EYA4"/>
<dbReference type="HGNC" id="HGNC:3522">
    <property type="gene designation" value="EYA4"/>
</dbReference>
<dbReference type="HPA" id="ENSG00000112319">
    <property type="expression patterns" value="Tissue enhanced (skeletal muscle, tongue)"/>
</dbReference>
<dbReference type="MalaCards" id="EYA4"/>
<dbReference type="MIM" id="601316">
    <property type="type" value="phenotype"/>
</dbReference>
<dbReference type="MIM" id="603550">
    <property type="type" value="gene"/>
</dbReference>
<dbReference type="MIM" id="605362">
    <property type="type" value="phenotype"/>
</dbReference>
<dbReference type="neXtProt" id="NX_O95677"/>
<dbReference type="OpenTargets" id="ENSG00000112319"/>
<dbReference type="Orphanet" id="90635">
    <property type="disease" value="Rare autosomal dominant non-syndromic sensorineural deafness type DFNA"/>
</dbReference>
<dbReference type="Orphanet" id="217622">
    <property type="disease" value="Sensorineural deafness with dilated cardiomyopathy"/>
</dbReference>
<dbReference type="PharmGKB" id="PA27934"/>
<dbReference type="VEuPathDB" id="HostDB:ENSG00000112319"/>
<dbReference type="eggNOG" id="KOG3107">
    <property type="taxonomic scope" value="Eukaryota"/>
</dbReference>
<dbReference type="GeneTree" id="ENSGT00950000182978"/>
<dbReference type="HOGENOM" id="CLU_021184_2_1_1"/>
<dbReference type="InParanoid" id="O95677"/>
<dbReference type="OMA" id="XDPPMAV"/>
<dbReference type="OrthoDB" id="167668at2759"/>
<dbReference type="PAN-GO" id="O95677">
    <property type="GO annotations" value="7 GO annotations based on evolutionary models"/>
</dbReference>
<dbReference type="PhylomeDB" id="O95677"/>
<dbReference type="TreeFam" id="TF319337"/>
<dbReference type="PathwayCommons" id="O95677"/>
<dbReference type="Reactome" id="R-HSA-5693565">
    <property type="pathway name" value="Recruitment and ATM-mediated phosphorylation of repair and signaling proteins at DNA double strand breaks"/>
</dbReference>
<dbReference type="SignaLink" id="O95677"/>
<dbReference type="BioGRID-ORCS" id="2070">
    <property type="hits" value="11 hits in 1168 CRISPR screens"/>
</dbReference>
<dbReference type="ChiTaRS" id="EYA4">
    <property type="organism name" value="human"/>
</dbReference>
<dbReference type="GeneWiki" id="EYA4"/>
<dbReference type="GenomeRNAi" id="2070"/>
<dbReference type="Pharos" id="O95677">
    <property type="development level" value="Tbio"/>
</dbReference>
<dbReference type="PRO" id="PR:O95677"/>
<dbReference type="Proteomes" id="UP000005640">
    <property type="component" value="Chromosome 6"/>
</dbReference>
<dbReference type="RNAct" id="O95677">
    <property type="molecule type" value="protein"/>
</dbReference>
<dbReference type="Bgee" id="ENSG00000112319">
    <property type="expression patterns" value="Expressed in biceps brachii and 149 other cell types or tissues"/>
</dbReference>
<dbReference type="ExpressionAtlas" id="O95677">
    <property type="expression patterns" value="baseline and differential"/>
</dbReference>
<dbReference type="GO" id="GO:0005737">
    <property type="term" value="C:cytoplasm"/>
    <property type="evidence" value="ECO:0007669"/>
    <property type="project" value="UniProtKB-SubCell"/>
</dbReference>
<dbReference type="GO" id="GO:0005634">
    <property type="term" value="C:nucleus"/>
    <property type="evidence" value="ECO:0000318"/>
    <property type="project" value="GO_Central"/>
</dbReference>
<dbReference type="GO" id="GO:0046872">
    <property type="term" value="F:metal ion binding"/>
    <property type="evidence" value="ECO:0007669"/>
    <property type="project" value="UniProtKB-KW"/>
</dbReference>
<dbReference type="GO" id="GO:0004725">
    <property type="term" value="F:protein tyrosine phosphatase activity"/>
    <property type="evidence" value="ECO:0000318"/>
    <property type="project" value="GO_Central"/>
</dbReference>
<dbReference type="GO" id="GO:0009653">
    <property type="term" value="P:anatomical structure morphogenesis"/>
    <property type="evidence" value="ECO:0000304"/>
    <property type="project" value="ProtInc"/>
</dbReference>
<dbReference type="GO" id="GO:0030154">
    <property type="term" value="P:cell differentiation"/>
    <property type="evidence" value="ECO:0000318"/>
    <property type="project" value="GO_Central"/>
</dbReference>
<dbReference type="GO" id="GO:0006325">
    <property type="term" value="P:chromatin organization"/>
    <property type="evidence" value="ECO:0007669"/>
    <property type="project" value="UniProtKB-KW"/>
</dbReference>
<dbReference type="GO" id="GO:0006281">
    <property type="term" value="P:DNA repair"/>
    <property type="evidence" value="ECO:0007669"/>
    <property type="project" value="UniProtKB-KW"/>
</dbReference>
<dbReference type="GO" id="GO:0048839">
    <property type="term" value="P:inner ear development"/>
    <property type="evidence" value="ECO:0007669"/>
    <property type="project" value="Ensembl"/>
</dbReference>
<dbReference type="GO" id="GO:2001240">
    <property type="term" value="P:negative regulation of extrinsic apoptotic signaling pathway in absence of ligand"/>
    <property type="evidence" value="ECO:0000318"/>
    <property type="project" value="GO_Central"/>
</dbReference>
<dbReference type="GO" id="GO:0045739">
    <property type="term" value="P:positive regulation of DNA repair"/>
    <property type="evidence" value="ECO:0000318"/>
    <property type="project" value="GO_Central"/>
</dbReference>
<dbReference type="GO" id="GO:0007601">
    <property type="term" value="P:visual perception"/>
    <property type="evidence" value="ECO:0000304"/>
    <property type="project" value="ProtInc"/>
</dbReference>
<dbReference type="CDD" id="cd02601">
    <property type="entry name" value="HAD_Eya"/>
    <property type="match status" value="1"/>
</dbReference>
<dbReference type="FunFam" id="3.40.50.12350:FF:000001">
    <property type="entry name" value="Eyes absent homolog"/>
    <property type="match status" value="1"/>
</dbReference>
<dbReference type="Gene3D" id="3.40.50.12350">
    <property type="match status" value="1"/>
</dbReference>
<dbReference type="InterPro" id="IPR028472">
    <property type="entry name" value="EYA"/>
</dbReference>
<dbReference type="InterPro" id="IPR006545">
    <property type="entry name" value="EYA_dom"/>
</dbReference>
<dbReference type="InterPro" id="IPR042577">
    <property type="entry name" value="EYA_dom_metazoan"/>
</dbReference>
<dbReference type="InterPro" id="IPR038102">
    <property type="entry name" value="EYA_dom_sf"/>
</dbReference>
<dbReference type="NCBIfam" id="TIGR01658">
    <property type="entry name" value="EYA-cons_domain"/>
    <property type="match status" value="1"/>
</dbReference>
<dbReference type="PANTHER" id="PTHR10190">
    <property type="entry name" value="EYES ABSENT"/>
    <property type="match status" value="1"/>
</dbReference>
<dbReference type="PANTHER" id="PTHR10190:SF17">
    <property type="entry name" value="EYES ABSENT HOMOLOG 4"/>
    <property type="match status" value="1"/>
</dbReference>
<dbReference type="Pfam" id="PF00702">
    <property type="entry name" value="Hydrolase"/>
    <property type="match status" value="1"/>
</dbReference>
<dbReference type="SFLD" id="SFLDG01129">
    <property type="entry name" value="C1.5:_HAD__Beta-PGM__Phosphata"/>
    <property type="match status" value="1"/>
</dbReference>
<dbReference type="SFLD" id="SFLDS00003">
    <property type="entry name" value="Haloacid_Dehalogenase"/>
    <property type="match status" value="1"/>
</dbReference>
<organism>
    <name type="scientific">Homo sapiens</name>
    <name type="common">Human</name>
    <dbReference type="NCBI Taxonomy" id="9606"/>
    <lineage>
        <taxon>Eukaryota</taxon>
        <taxon>Metazoa</taxon>
        <taxon>Chordata</taxon>
        <taxon>Craniata</taxon>
        <taxon>Vertebrata</taxon>
        <taxon>Euteleostomi</taxon>
        <taxon>Mammalia</taxon>
        <taxon>Eutheria</taxon>
        <taxon>Euarchontoglires</taxon>
        <taxon>Primates</taxon>
        <taxon>Haplorrhini</taxon>
        <taxon>Catarrhini</taxon>
        <taxon>Hominidae</taxon>
        <taxon>Homo</taxon>
    </lineage>
</organism>
<keyword id="KW-0007">Acetylation</keyword>
<keyword id="KW-0010">Activator</keyword>
<keyword id="KW-0025">Alternative splicing</keyword>
<keyword id="KW-0122">Cardiomyopathy</keyword>
<keyword id="KW-0156">Chromatin regulator</keyword>
<keyword id="KW-0963">Cytoplasm</keyword>
<keyword id="KW-0209">Deafness</keyword>
<keyword id="KW-0217">Developmental protein</keyword>
<keyword id="KW-0225">Disease variant</keyword>
<keyword id="KW-0227">DNA damage</keyword>
<keyword id="KW-0234">DNA repair</keyword>
<keyword id="KW-0378">Hydrolase</keyword>
<keyword id="KW-1017">Isopeptide bond</keyword>
<keyword id="KW-0460">Magnesium</keyword>
<keyword id="KW-0479">Metal-binding</keyword>
<keyword id="KW-1010">Non-syndromic deafness</keyword>
<keyword id="KW-0539">Nucleus</keyword>
<keyword id="KW-0597">Phosphoprotein</keyword>
<keyword id="KW-0904">Protein phosphatase</keyword>
<keyword id="KW-1267">Proteomics identification</keyword>
<keyword id="KW-1185">Reference proteome</keyword>
<keyword id="KW-0804">Transcription</keyword>
<keyword id="KW-0805">Transcription regulation</keyword>
<keyword id="KW-0832">Ubl conjugation</keyword>
<reference key="1">
    <citation type="journal article" date="1999" name="Hum. Mol. Genet.">
        <title>EYA4, a novel vertebrate gene related to Drosophila eyes absent.</title>
        <authorList>
            <person name="Borsani G."/>
            <person name="DeGrandi A."/>
            <person name="Ballabio A."/>
            <person name="Bulfone A."/>
            <person name="Bernard L."/>
            <person name="Banfi S."/>
            <person name="Gattuso C."/>
            <person name="Mariani M."/>
            <person name="Dixon M."/>
            <person name="Donnai D."/>
            <person name="Metcalfe K."/>
            <person name="Winter R."/>
            <person name="Robertson M."/>
            <person name="Axton R."/>
            <person name="Brown A."/>
            <person name="van Heyningen V."/>
            <person name="Hanson I."/>
        </authorList>
    </citation>
    <scope>NUCLEOTIDE SEQUENCE [GENOMIC DNA / MRNA]</scope>
    <scope>VARIANT SER-277</scope>
    <scope>ALTERNATIVE SPLICING</scope>
    <source>
        <tissue>Lens epithelium</tissue>
        <tissue>Skeletal muscle</tissue>
    </source>
</reference>
<reference key="2">
    <citation type="journal article" date="2004" name="Nat. Genet.">
        <title>Complete sequencing and characterization of 21,243 full-length human cDNAs.</title>
        <authorList>
            <person name="Ota T."/>
            <person name="Suzuki Y."/>
            <person name="Nishikawa T."/>
            <person name="Otsuki T."/>
            <person name="Sugiyama T."/>
            <person name="Irie R."/>
            <person name="Wakamatsu A."/>
            <person name="Hayashi K."/>
            <person name="Sato H."/>
            <person name="Nagai K."/>
            <person name="Kimura K."/>
            <person name="Makita H."/>
            <person name="Sekine M."/>
            <person name="Obayashi M."/>
            <person name="Nishi T."/>
            <person name="Shibahara T."/>
            <person name="Tanaka T."/>
            <person name="Ishii S."/>
            <person name="Yamamoto J."/>
            <person name="Saito K."/>
            <person name="Kawai Y."/>
            <person name="Isono Y."/>
            <person name="Nakamura Y."/>
            <person name="Nagahari K."/>
            <person name="Murakami K."/>
            <person name="Yasuda T."/>
            <person name="Iwayanagi T."/>
            <person name="Wagatsuma M."/>
            <person name="Shiratori A."/>
            <person name="Sudo H."/>
            <person name="Hosoiri T."/>
            <person name="Kaku Y."/>
            <person name="Kodaira H."/>
            <person name="Kondo H."/>
            <person name="Sugawara M."/>
            <person name="Takahashi M."/>
            <person name="Kanda K."/>
            <person name="Yokoi T."/>
            <person name="Furuya T."/>
            <person name="Kikkawa E."/>
            <person name="Omura Y."/>
            <person name="Abe K."/>
            <person name="Kamihara K."/>
            <person name="Katsuta N."/>
            <person name="Sato K."/>
            <person name="Tanikawa M."/>
            <person name="Yamazaki M."/>
            <person name="Ninomiya K."/>
            <person name="Ishibashi T."/>
            <person name="Yamashita H."/>
            <person name="Murakawa K."/>
            <person name="Fujimori K."/>
            <person name="Tanai H."/>
            <person name="Kimata M."/>
            <person name="Watanabe M."/>
            <person name="Hiraoka S."/>
            <person name="Chiba Y."/>
            <person name="Ishida S."/>
            <person name="Ono Y."/>
            <person name="Takiguchi S."/>
            <person name="Watanabe S."/>
            <person name="Yosida M."/>
            <person name="Hotuta T."/>
            <person name="Kusano J."/>
            <person name="Kanehori K."/>
            <person name="Takahashi-Fujii A."/>
            <person name="Hara H."/>
            <person name="Tanase T.-O."/>
            <person name="Nomura Y."/>
            <person name="Togiya S."/>
            <person name="Komai F."/>
            <person name="Hara R."/>
            <person name="Takeuchi K."/>
            <person name="Arita M."/>
            <person name="Imose N."/>
            <person name="Musashino K."/>
            <person name="Yuuki H."/>
            <person name="Oshima A."/>
            <person name="Sasaki N."/>
            <person name="Aotsuka S."/>
            <person name="Yoshikawa Y."/>
            <person name="Matsunawa H."/>
            <person name="Ichihara T."/>
            <person name="Shiohata N."/>
            <person name="Sano S."/>
            <person name="Moriya S."/>
            <person name="Momiyama H."/>
            <person name="Satoh N."/>
            <person name="Takami S."/>
            <person name="Terashima Y."/>
            <person name="Suzuki O."/>
            <person name="Nakagawa S."/>
            <person name="Senoh A."/>
            <person name="Mizoguchi H."/>
            <person name="Goto Y."/>
            <person name="Shimizu F."/>
            <person name="Wakebe H."/>
            <person name="Hishigaki H."/>
            <person name="Watanabe T."/>
            <person name="Sugiyama A."/>
            <person name="Takemoto M."/>
            <person name="Kawakami B."/>
            <person name="Yamazaki M."/>
            <person name="Watanabe K."/>
            <person name="Kumagai A."/>
            <person name="Itakura S."/>
            <person name="Fukuzumi Y."/>
            <person name="Fujimori Y."/>
            <person name="Komiyama M."/>
            <person name="Tashiro H."/>
            <person name="Tanigami A."/>
            <person name="Fujiwara T."/>
            <person name="Ono T."/>
            <person name="Yamada K."/>
            <person name="Fujii Y."/>
            <person name="Ozaki K."/>
            <person name="Hirao M."/>
            <person name="Ohmori Y."/>
            <person name="Kawabata A."/>
            <person name="Hikiji T."/>
            <person name="Kobatake N."/>
            <person name="Inagaki H."/>
            <person name="Ikema Y."/>
            <person name="Okamoto S."/>
            <person name="Okitani R."/>
            <person name="Kawakami T."/>
            <person name="Noguchi S."/>
            <person name="Itoh T."/>
            <person name="Shigeta K."/>
            <person name="Senba T."/>
            <person name="Matsumura K."/>
            <person name="Nakajima Y."/>
            <person name="Mizuno T."/>
            <person name="Morinaga M."/>
            <person name="Sasaki M."/>
            <person name="Togashi T."/>
            <person name="Oyama M."/>
            <person name="Hata H."/>
            <person name="Watanabe M."/>
            <person name="Komatsu T."/>
            <person name="Mizushima-Sugano J."/>
            <person name="Satoh T."/>
            <person name="Shirai Y."/>
            <person name="Takahashi Y."/>
            <person name="Nakagawa K."/>
            <person name="Okumura K."/>
            <person name="Nagase T."/>
            <person name="Nomura N."/>
            <person name="Kikuchi H."/>
            <person name="Masuho Y."/>
            <person name="Yamashita R."/>
            <person name="Nakai K."/>
            <person name="Yada T."/>
            <person name="Nakamura Y."/>
            <person name="Ohara O."/>
            <person name="Isogai T."/>
            <person name="Sugano S."/>
        </authorList>
    </citation>
    <scope>NUCLEOTIDE SEQUENCE [LARGE SCALE MRNA] (ISOFORM 5)</scope>
    <source>
        <tissue>Testis</tissue>
    </source>
</reference>
<reference key="3">
    <citation type="journal article" date="2003" name="Nature">
        <title>The DNA sequence and analysis of human chromosome 6.</title>
        <authorList>
            <person name="Mungall A.J."/>
            <person name="Palmer S.A."/>
            <person name="Sims S.K."/>
            <person name="Edwards C.A."/>
            <person name="Ashurst J.L."/>
            <person name="Wilming L."/>
            <person name="Jones M.C."/>
            <person name="Horton R."/>
            <person name="Hunt S.E."/>
            <person name="Scott C.E."/>
            <person name="Gilbert J.G.R."/>
            <person name="Clamp M.E."/>
            <person name="Bethel G."/>
            <person name="Milne S."/>
            <person name="Ainscough R."/>
            <person name="Almeida J.P."/>
            <person name="Ambrose K.D."/>
            <person name="Andrews T.D."/>
            <person name="Ashwell R.I.S."/>
            <person name="Babbage A.K."/>
            <person name="Bagguley C.L."/>
            <person name="Bailey J."/>
            <person name="Banerjee R."/>
            <person name="Barker D.J."/>
            <person name="Barlow K.F."/>
            <person name="Bates K."/>
            <person name="Beare D.M."/>
            <person name="Beasley H."/>
            <person name="Beasley O."/>
            <person name="Bird C.P."/>
            <person name="Blakey S.E."/>
            <person name="Bray-Allen S."/>
            <person name="Brook J."/>
            <person name="Brown A.J."/>
            <person name="Brown J.Y."/>
            <person name="Burford D.C."/>
            <person name="Burrill W."/>
            <person name="Burton J."/>
            <person name="Carder C."/>
            <person name="Carter N.P."/>
            <person name="Chapman J.C."/>
            <person name="Clark S.Y."/>
            <person name="Clark G."/>
            <person name="Clee C.M."/>
            <person name="Clegg S."/>
            <person name="Cobley V."/>
            <person name="Collier R.E."/>
            <person name="Collins J.E."/>
            <person name="Colman L.K."/>
            <person name="Corby N.R."/>
            <person name="Coville G.J."/>
            <person name="Culley K.M."/>
            <person name="Dhami P."/>
            <person name="Davies J."/>
            <person name="Dunn M."/>
            <person name="Earthrowl M.E."/>
            <person name="Ellington A.E."/>
            <person name="Evans K.A."/>
            <person name="Faulkner L."/>
            <person name="Francis M.D."/>
            <person name="Frankish A."/>
            <person name="Frankland J."/>
            <person name="French L."/>
            <person name="Garner P."/>
            <person name="Garnett J."/>
            <person name="Ghori M.J."/>
            <person name="Gilby L.M."/>
            <person name="Gillson C.J."/>
            <person name="Glithero R.J."/>
            <person name="Grafham D.V."/>
            <person name="Grant M."/>
            <person name="Gribble S."/>
            <person name="Griffiths C."/>
            <person name="Griffiths M.N.D."/>
            <person name="Hall R."/>
            <person name="Halls K.S."/>
            <person name="Hammond S."/>
            <person name="Harley J.L."/>
            <person name="Hart E.A."/>
            <person name="Heath P.D."/>
            <person name="Heathcott R."/>
            <person name="Holmes S.J."/>
            <person name="Howden P.J."/>
            <person name="Howe K.L."/>
            <person name="Howell G.R."/>
            <person name="Huckle E."/>
            <person name="Humphray S.J."/>
            <person name="Humphries M.D."/>
            <person name="Hunt A.R."/>
            <person name="Johnson C.M."/>
            <person name="Joy A.A."/>
            <person name="Kay M."/>
            <person name="Keenan S.J."/>
            <person name="Kimberley A.M."/>
            <person name="King A."/>
            <person name="Laird G.K."/>
            <person name="Langford C."/>
            <person name="Lawlor S."/>
            <person name="Leongamornlert D.A."/>
            <person name="Leversha M."/>
            <person name="Lloyd C.R."/>
            <person name="Lloyd D.M."/>
            <person name="Loveland J.E."/>
            <person name="Lovell J."/>
            <person name="Martin S."/>
            <person name="Mashreghi-Mohammadi M."/>
            <person name="Maslen G.L."/>
            <person name="Matthews L."/>
            <person name="McCann O.T."/>
            <person name="McLaren S.J."/>
            <person name="McLay K."/>
            <person name="McMurray A."/>
            <person name="Moore M.J.F."/>
            <person name="Mullikin J.C."/>
            <person name="Niblett D."/>
            <person name="Nickerson T."/>
            <person name="Novik K.L."/>
            <person name="Oliver K."/>
            <person name="Overton-Larty E.K."/>
            <person name="Parker A."/>
            <person name="Patel R."/>
            <person name="Pearce A.V."/>
            <person name="Peck A.I."/>
            <person name="Phillimore B.J.C.T."/>
            <person name="Phillips S."/>
            <person name="Plumb R.W."/>
            <person name="Porter K.M."/>
            <person name="Ramsey Y."/>
            <person name="Ranby S.A."/>
            <person name="Rice C.M."/>
            <person name="Ross M.T."/>
            <person name="Searle S.M."/>
            <person name="Sehra H.K."/>
            <person name="Sheridan E."/>
            <person name="Skuce C.D."/>
            <person name="Smith S."/>
            <person name="Smith M."/>
            <person name="Spraggon L."/>
            <person name="Squares S.L."/>
            <person name="Steward C.A."/>
            <person name="Sycamore N."/>
            <person name="Tamlyn-Hall G."/>
            <person name="Tester J."/>
            <person name="Theaker A.J."/>
            <person name="Thomas D.W."/>
            <person name="Thorpe A."/>
            <person name="Tracey A."/>
            <person name="Tromans A."/>
            <person name="Tubby B."/>
            <person name="Wall M."/>
            <person name="Wallis J.M."/>
            <person name="West A.P."/>
            <person name="White S.S."/>
            <person name="Whitehead S.L."/>
            <person name="Whittaker H."/>
            <person name="Wild A."/>
            <person name="Willey D.J."/>
            <person name="Wilmer T.E."/>
            <person name="Wood J.M."/>
            <person name="Wray P.W."/>
            <person name="Wyatt J.C."/>
            <person name="Young L."/>
            <person name="Younger R.M."/>
            <person name="Bentley D.R."/>
            <person name="Coulson A."/>
            <person name="Durbin R.M."/>
            <person name="Hubbard T."/>
            <person name="Sulston J.E."/>
            <person name="Dunham I."/>
            <person name="Rogers J."/>
            <person name="Beck S."/>
        </authorList>
    </citation>
    <scope>NUCLEOTIDE SEQUENCE [LARGE SCALE GENOMIC DNA]</scope>
</reference>
<reference key="4">
    <citation type="journal article" date="2004" name="Genome Res.">
        <title>The status, quality, and expansion of the NIH full-length cDNA project: the Mammalian Gene Collection (MGC).</title>
        <authorList>
            <consortium name="The MGC Project Team"/>
        </authorList>
    </citation>
    <scope>NUCLEOTIDE SEQUENCE [LARGE SCALE MRNA] (ISOFORM 2)</scope>
    <source>
        <tissue>Brain</tissue>
    </source>
</reference>
<reference key="5">
    <citation type="journal article" date="2001" name="Hum. Mol. Genet.">
        <title>Mutations in the transcriptional activator EYA4 cause late-onset deafness at the DFNA10 locus.</title>
        <authorList>
            <person name="Wayne S."/>
            <person name="Robertson N.G."/>
            <person name="DeClau F."/>
            <person name="Chen N."/>
            <person name="Verhoeven K."/>
            <person name="Prasad S."/>
            <person name="Tranebjaerg L."/>
            <person name="Morton C.C."/>
            <person name="Ryan A.F."/>
            <person name="Van Camp G."/>
            <person name="Smith R.J.H."/>
        </authorList>
    </citation>
    <scope>INVOLVEMENT IN DFNA10</scope>
</reference>
<reference key="6">
    <citation type="journal article" date="2005" name="Nat. Genet.">
        <title>Mutation in the transcriptional coactivator EYA4 causes dilated cardiomyopathy and sensorineural hearing loss.</title>
        <authorList>
            <person name="Schoenberger J."/>
            <person name="Wang L."/>
            <person name="Shin J.T."/>
            <person name="Kim S.D."/>
            <person name="Depreux F.F.S."/>
            <person name="Zhu H."/>
            <person name="Zon L."/>
            <person name="Pizard A."/>
            <person name="Kim J.B."/>
            <person name="Macrae C.A."/>
            <person name="Mungall A.J."/>
            <person name="Seidman J.G."/>
            <person name="Seidman C.E."/>
        </authorList>
    </citation>
    <scope>INVOLVEMENT IN CMD1J</scope>
    <scope>TISSUE SPECIFICITY</scope>
</reference>
<reference key="7">
    <citation type="journal article" date="2008" name="Mol. Cell">
        <title>Kinase-selective enrichment enables quantitative phosphoproteomics of the kinome across the cell cycle.</title>
        <authorList>
            <person name="Daub H."/>
            <person name="Olsen J.V."/>
            <person name="Bairlein M."/>
            <person name="Gnad F."/>
            <person name="Oppermann F.S."/>
            <person name="Korner R."/>
            <person name="Greff Z."/>
            <person name="Keri G."/>
            <person name="Stemmann O."/>
            <person name="Mann M."/>
        </authorList>
    </citation>
    <scope>PHOSPHORYLATION [LARGE SCALE ANALYSIS] AT SER-361</scope>
    <scope>IDENTIFICATION BY MASS SPECTROMETRY [LARGE SCALE ANALYSIS]</scope>
    <source>
        <tissue>Cervix carcinoma</tissue>
    </source>
</reference>
<reference key="8">
    <citation type="journal article" date="2009" name="Anal. Chem.">
        <title>Lys-N and trypsin cover complementary parts of the phosphoproteome in a refined SCX-based approach.</title>
        <authorList>
            <person name="Gauci S."/>
            <person name="Helbig A.O."/>
            <person name="Slijper M."/>
            <person name="Krijgsveld J."/>
            <person name="Heck A.J."/>
            <person name="Mohammed S."/>
        </authorList>
    </citation>
    <scope>ACETYLATION [LARGE SCALE ANALYSIS] AT MET-1</scope>
    <scope>IDENTIFICATION BY MASS SPECTROMETRY [LARGE SCALE ANALYSIS]</scope>
</reference>
<reference key="9">
    <citation type="journal article" date="2009" name="Hum. Mutat.">
        <title>EYA4, deleted in a case with middle interhemispheric variant of holoprosencephaly, interacts with SIX3 both physically and functionally.</title>
        <authorList>
            <person name="Abe Y."/>
            <person name="Oka A."/>
            <person name="Mizuguchi M."/>
            <person name="Igarashi T."/>
            <person name="Ishikawa S."/>
            <person name="Aburatani H."/>
            <person name="Yokoyama S."/>
            <person name="Asahara H."/>
            <person name="Nagao K."/>
            <person name="Yamada M."/>
            <person name="Miyashita T."/>
        </authorList>
    </citation>
    <scope>INTERACTION WITH SIX3</scope>
</reference>
<reference key="10">
    <citation type="journal article" date="2013" name="J. Proteome Res.">
        <title>Toward a comprehensive characterization of a human cancer cell phosphoproteome.</title>
        <authorList>
            <person name="Zhou H."/>
            <person name="Di Palma S."/>
            <person name="Preisinger C."/>
            <person name="Peng M."/>
            <person name="Polat A.N."/>
            <person name="Heck A.J."/>
            <person name="Mohammed S."/>
        </authorList>
    </citation>
    <scope>PHOSPHORYLATION [LARGE SCALE ANALYSIS] AT SER-361</scope>
    <scope>IDENTIFICATION BY MASS SPECTROMETRY [LARGE SCALE ANALYSIS]</scope>
    <source>
        <tissue>Cervix carcinoma</tissue>
    </source>
</reference>
<reference key="11">
    <citation type="journal article" date="2017" name="Nat. Struct. Mol. Biol.">
        <title>Site-specific mapping of the human SUMO proteome reveals co-modification with phosphorylation.</title>
        <authorList>
            <person name="Hendriks I.A."/>
            <person name="Lyon D."/>
            <person name="Young C."/>
            <person name="Jensen L.J."/>
            <person name="Vertegaal A.C."/>
            <person name="Nielsen M.L."/>
        </authorList>
    </citation>
    <scope>SUMOYLATION [LARGE SCALE ANALYSIS] AT LYS-14 AND LYS-52</scope>
    <scope>IDENTIFICATION BY MASS SPECTROMETRY [LARGE SCALE ANALYSIS]</scope>
</reference>
<reference key="12">
    <citation type="journal article" date="2006" name="Science">
        <title>The consensus coding sequences of human breast and colorectal cancers.</title>
        <authorList>
            <person name="Sjoeblom T."/>
            <person name="Jones S."/>
            <person name="Wood L.D."/>
            <person name="Parsons D.W."/>
            <person name="Lin J."/>
            <person name="Barber T.D."/>
            <person name="Mandelker D."/>
            <person name="Leary R.J."/>
            <person name="Ptak J."/>
            <person name="Silliman N."/>
            <person name="Szabo S."/>
            <person name="Buckhaults P."/>
            <person name="Farrell C."/>
            <person name="Meeh P."/>
            <person name="Markowitz S.D."/>
            <person name="Willis J."/>
            <person name="Dawson D."/>
            <person name="Willson J.K.V."/>
            <person name="Gazdar A.F."/>
            <person name="Hartigan J."/>
            <person name="Wu L."/>
            <person name="Liu C."/>
            <person name="Parmigiani G."/>
            <person name="Park B.H."/>
            <person name="Bachman K.E."/>
            <person name="Papadopoulos N."/>
            <person name="Vogelstein B."/>
            <person name="Kinzler K.W."/>
            <person name="Velculescu V.E."/>
        </authorList>
    </citation>
    <scope>VARIANTS [LARGE SCALE ANALYSIS] ARG-152 AND ASN-301</scope>
</reference>
<reference key="13">
    <citation type="journal article" date="2012" name="Orphanet J. Rare Dis.">
        <title>Targeted massive parallel sequencing: the effective detection of novel causative mutations associated with hearing loss in small families.</title>
        <authorList>
            <person name="Baek J.I."/>
            <person name="Oh S.K."/>
            <person name="Kim D.B."/>
            <person name="Choi S.Y."/>
            <person name="Kim U.K."/>
            <person name="Lee K.Y."/>
            <person name="Lee S.H."/>
        </authorList>
    </citation>
    <scope>VARIANT DFNA10 288-SER--LEU-639 DEL</scope>
</reference>
<reference key="14">
    <citation type="journal article" date="2015" name="J. Hum. Genet.">
        <title>A novel mutation of EYA4 in a large Chinese family with autosomal dominant middle-frequency sensorineural hearing loss by targeted exome sequencing.</title>
        <authorList>
            <person name="Sun Y."/>
            <person name="Zhang Z."/>
            <person name="Cheng J."/>
            <person name="Lu Y."/>
            <person name="Yang C.L."/>
            <person name="Luo Y.Y."/>
            <person name="Yang G."/>
            <person name="Yang H."/>
            <person name="Zhu L."/>
            <person name="Zhou J."/>
            <person name="Yao H.Q."/>
        </authorList>
    </citation>
    <scope>VARIANT DFNA10 ARG-548</scope>
</reference>
<reference key="15">
    <citation type="journal article" date="2015" name="PLoS ONE">
        <title>Exome sequencing identifies a mutation in EYA4 as a novel cause of autosomal dominant non-syndromic hearing loss.</title>
        <authorList>
            <person name="Liu F."/>
            <person name="Hu J."/>
            <person name="Xia W."/>
            <person name="Hao L."/>
            <person name="Ma J."/>
            <person name="Ma D."/>
            <person name="Ma Z."/>
        </authorList>
    </citation>
    <scope>VARIANT DFNA10 ARG-171</scope>
</reference>
<evidence type="ECO:0000250" key="1">
    <source>
        <dbReference type="UniProtKB" id="O00167"/>
    </source>
</evidence>
<evidence type="ECO:0000250" key="2">
    <source>
        <dbReference type="UniProtKB" id="Q99502"/>
    </source>
</evidence>
<evidence type="ECO:0000256" key="3">
    <source>
        <dbReference type="SAM" id="MobiDB-lite"/>
    </source>
</evidence>
<evidence type="ECO:0000269" key="4">
    <source>
    </source>
</evidence>
<evidence type="ECO:0000269" key="5">
    <source>
    </source>
</evidence>
<evidence type="ECO:0000269" key="6">
    <source>
    </source>
</evidence>
<evidence type="ECO:0000269" key="7">
    <source>
    </source>
</evidence>
<evidence type="ECO:0000269" key="8">
    <source>
    </source>
</evidence>
<evidence type="ECO:0000269" key="9">
    <source>
    </source>
</evidence>
<evidence type="ECO:0000269" key="10">
    <source>
    </source>
</evidence>
<evidence type="ECO:0000269" key="11">
    <source>
    </source>
</evidence>
<evidence type="ECO:0000303" key="12">
    <source>
    </source>
</evidence>
<evidence type="ECO:0000303" key="13">
    <source>
    </source>
</evidence>
<evidence type="ECO:0000305" key="14"/>
<evidence type="ECO:0007744" key="15">
    <source>
    </source>
</evidence>
<evidence type="ECO:0007744" key="16">
    <source>
    </source>
</evidence>
<evidence type="ECO:0007744" key="17">
    <source>
    </source>
</evidence>
<evidence type="ECO:0007744" key="18">
    <source>
    </source>
</evidence>
<comment type="function">
    <text evidence="2">Tyrosine phosphatase that specifically dephosphorylates 'Tyr-142' of histone H2AX (H2AXY142ph). 'Tyr-142' phosphorylation of histone H2AX plays a central role in DNA repair and acts as a mark that distinguishes between apoptotic and repair responses to genotoxic stress. Promotes efficient DNA repair by dephosphorylating H2AX, promoting the recruitment of DNA repair complexes containing MDC1. Its function as histone phosphatase probably explains its role in transcription regulation during organogenesis. May be involved in development of the eye (By similarity).</text>
</comment>
<comment type="catalytic activity">
    <reaction evidence="2">
        <text>O-phospho-L-tyrosyl-[protein] + H2O = L-tyrosyl-[protein] + phosphate</text>
        <dbReference type="Rhea" id="RHEA:10684"/>
        <dbReference type="Rhea" id="RHEA-COMP:10136"/>
        <dbReference type="Rhea" id="RHEA-COMP:20101"/>
        <dbReference type="ChEBI" id="CHEBI:15377"/>
        <dbReference type="ChEBI" id="CHEBI:43474"/>
        <dbReference type="ChEBI" id="CHEBI:46858"/>
        <dbReference type="ChEBI" id="CHEBI:61978"/>
        <dbReference type="EC" id="3.1.3.48"/>
    </reaction>
</comment>
<comment type="cofactor">
    <cofactor evidence="1">
        <name>Mg(2+)</name>
        <dbReference type="ChEBI" id="CHEBI:18420"/>
    </cofactor>
    <text evidence="1">Binds 1 Mg(2+) ion per subunit.</text>
</comment>
<comment type="subunit">
    <text evidence="7">Interacts with SIX3; translocates EYA4 from the cytoplasm to the nucleus and promotes activation of their target genes.</text>
</comment>
<comment type="subcellular location">
    <subcellularLocation>
        <location evidence="2">Cytoplasm</location>
    </subcellularLocation>
    <subcellularLocation>
        <location evidence="2">Nucleus</location>
    </subcellularLocation>
</comment>
<comment type="alternative products">
    <event type="alternative splicing"/>
    <isoform>
        <id>O95677-1</id>
        <name>1</name>
        <sequence type="displayed"/>
    </isoform>
    <isoform>
        <id>O95677-2</id>
        <name>2</name>
        <sequence type="described" ref="VSP_001495 VSP_001496"/>
    </isoform>
    <isoform>
        <id>O95677-3</id>
        <name>3</name>
        <sequence type="described" ref="VSP_001497 VSP_001498"/>
    </isoform>
    <isoform>
        <id>O95677-4</id>
        <name>4</name>
        <sequence type="described" ref="VSP_001499"/>
    </isoform>
    <isoform>
        <id>O95677-5</id>
        <name>5</name>
        <sequence type="described" ref="VSP_042160 VSP_001499"/>
    </isoform>
</comment>
<comment type="tissue specificity">
    <text evidence="5">Highly expressed in heart and skeletal muscle.</text>
</comment>
<comment type="disease" evidence="4 8 9 10">
    <disease id="DI-00840">
        <name>Deafness, autosomal dominant, 10</name>
        <acronym>DFNA10</acronym>
        <description>A form of non-syndromic sensorineural hearing loss. Sensorineural deafness results from damage to the neural receptors of the inner ear, the nerve pathways to the brain, or the area of the brain that receives sound information.</description>
        <dbReference type="MIM" id="601316"/>
    </disease>
    <text>The disease is caused by variants affecting the gene represented in this entry.</text>
</comment>
<comment type="disease" evidence="5">
    <disease id="DI-00217">
        <name>Cardiomyopathy, dilated, 1J</name>
        <acronym>CMD1J</acronym>
        <description>A disorder characterized by ventricular dilation and impaired systolic function, resulting in congestive heart failure and arrhythmia. Patients are at risk of premature death. CMD1J is characterized by the association of sensorineural hearing loss and dilated cardiomyopathy in the absence of other anomalies.</description>
        <dbReference type="MIM" id="605362"/>
    </disease>
    <text>The disease is caused by variants affecting the gene represented in this entry.</text>
</comment>
<comment type="miscellaneous">
    <molecule>Isoform 3</molecule>
    <text evidence="14">May be produced at very low levels due to a premature stop codon in the mRNA, leading to nonsense-mediated mRNA decay.</text>
</comment>
<comment type="similarity">
    <text evidence="14">Belongs to the HAD-like hydrolase superfamily. EYA family.</text>
</comment>
<proteinExistence type="evidence at protein level"/>